<sequence>MTKSLTSRKRIRKDFGRIPTVAPMPNLIEVQKSSYDQFLQIGVPVDKRTDSGLQEVFKSVFPIRDFSGKGELEFVAYELEEPKYDTDECQQRGMTFAAPLKVTLRLLVWDVDEETGARSIRDIKEQDVYMGDMPLMTSNGTFIINGTERVIVSQMHRSPGVFFDHDKGKTHSSGKFLFAARVIPYRGSWLDFEFDAKDMVYVRIDRRRKLPVTTLLYALEGAAATALREARTAEGRSVDPSEIAGMTSEEILDFFYQKLSYKRDDKGWKVDFKPDHLRGVKLMFDLVDAATGEVKIEAGTKVTPRAARKLAEDGMTEMRVFTEELVGRYAAEDMINEASGEIYAEAGEELTEAMLADMEKAGFTELRVLHIDHVNVGPYVRNTLAMDKNTTREEALIDIYRVMRPGEPPTLETADALFKGLFFDSERYDLSAVGRVKMNARLGFTMQEAPDTMRVLRKEDVLHIIRQLVELKDGKGEIDDIDHLGNRRVRSVGELMENQYRVGLLRMERAIRERMSSVDIDTVMPHDLINAKPAAAAVREFFGSSQLSQFMDQTNPLSEITHKRRLSALGPGGLTRERAGFEVRDVHPTHYGRICPIETPEGPNIGLINSLATFARVNQYGFIESPYRKVVEGTVTDEVTYMSAMEEGKYVIAQANAALTEDGHFADDLISCRKASDFEMVQPQDIDYIDVSPKQLVSVAAALIPFLENDDANRALMGSNMQRQAVPLVKAEAPYVGTGMEAAVARDSGATIAAKRAGVVQQVDATRIVIRATEDLKIAESGVDIYRLQKFQRSNQSTCINQRPLVKVGDLVGRGEILADGPLTEMGELALGRNVLVAFMPWNGYNFEDSILISERIVSDDVFTSIHIEEFEVMARDTKLGQEEITRDIPNVGEEALKNLDEAGIVYIGAEVQAGDILVGKVTPKGESPMTPEEKLLRAIFGEKASDVRDTSLRIPPGVTGTVVEVRVFNRRGVEKDERALAIERQEIESLAKDRDDERAILEGSFARRLKELLIGQKVVGGPRGMATGGVISEDLLSGYTAAQWRQIAVENDETATEIEGLKKAYEESIAKIQERFENKVEKLQRGDELPPGVLKMVKVFVAVKRKLQPGDKMAGRHGNKGVISKINPIEDMPYLEDGTYVDIVLNPLGVPSRMNVGQILETHLGWACRGLGAQIGALLEQVKRGLIPINDLREKLDDVYGPRHAKEDLAPMGDDQIKELAFNLRSGVPIATPVFDGARESDIVDMLRKAGLDSSGQVTLSDGRTGEPFDRKVTVGYIYMLKLHHLVDDKIHARSIGPYSLVTQQPLGGKAQFGGQRFGEMEVWALEAYGAAYTLQEMLTVKSDDVSGRTKVYEAIVKGDDTFEAGIPESFNVLVKEMRSLGLDVELGQSSF</sequence>
<evidence type="ECO:0000255" key="1">
    <source>
        <dbReference type="HAMAP-Rule" id="MF_01321"/>
    </source>
</evidence>
<gene>
    <name evidence="1" type="primary">rpoB</name>
    <name type="ordered locus">Rru_A2695</name>
</gene>
<organism>
    <name type="scientific">Rhodospirillum rubrum (strain ATCC 11170 / ATH 1.1.1 / DSM 467 / LMG 4362 / NCIMB 8255 / S1)</name>
    <dbReference type="NCBI Taxonomy" id="269796"/>
    <lineage>
        <taxon>Bacteria</taxon>
        <taxon>Pseudomonadati</taxon>
        <taxon>Pseudomonadota</taxon>
        <taxon>Alphaproteobacteria</taxon>
        <taxon>Rhodospirillales</taxon>
        <taxon>Rhodospirillaceae</taxon>
        <taxon>Rhodospirillum</taxon>
    </lineage>
</organism>
<dbReference type="EC" id="2.7.7.6" evidence="1"/>
<dbReference type="EMBL" id="CP000230">
    <property type="protein sequence ID" value="ABC23492.1"/>
    <property type="molecule type" value="Genomic_DNA"/>
</dbReference>
<dbReference type="RefSeq" id="WP_011390505.1">
    <property type="nucleotide sequence ID" value="NC_007643.1"/>
</dbReference>
<dbReference type="RefSeq" id="YP_427779.1">
    <property type="nucleotide sequence ID" value="NC_007643.1"/>
</dbReference>
<dbReference type="SMR" id="Q2RQV3"/>
<dbReference type="STRING" id="269796.Rru_A2695"/>
<dbReference type="EnsemblBacteria" id="ABC23492">
    <property type="protein sequence ID" value="ABC23492"/>
    <property type="gene ID" value="Rru_A2695"/>
</dbReference>
<dbReference type="KEGG" id="rru:Rru_A2695"/>
<dbReference type="PATRIC" id="fig|269796.9.peg.2803"/>
<dbReference type="eggNOG" id="COG0085">
    <property type="taxonomic scope" value="Bacteria"/>
</dbReference>
<dbReference type="HOGENOM" id="CLU_000524_4_0_5"/>
<dbReference type="PhylomeDB" id="Q2RQV3"/>
<dbReference type="Proteomes" id="UP000001929">
    <property type="component" value="Chromosome"/>
</dbReference>
<dbReference type="GO" id="GO:0000428">
    <property type="term" value="C:DNA-directed RNA polymerase complex"/>
    <property type="evidence" value="ECO:0007669"/>
    <property type="project" value="UniProtKB-KW"/>
</dbReference>
<dbReference type="GO" id="GO:0003677">
    <property type="term" value="F:DNA binding"/>
    <property type="evidence" value="ECO:0007669"/>
    <property type="project" value="UniProtKB-UniRule"/>
</dbReference>
<dbReference type="GO" id="GO:0003899">
    <property type="term" value="F:DNA-directed RNA polymerase activity"/>
    <property type="evidence" value="ECO:0007669"/>
    <property type="project" value="UniProtKB-UniRule"/>
</dbReference>
<dbReference type="GO" id="GO:0032549">
    <property type="term" value="F:ribonucleoside binding"/>
    <property type="evidence" value="ECO:0007669"/>
    <property type="project" value="InterPro"/>
</dbReference>
<dbReference type="GO" id="GO:0006351">
    <property type="term" value="P:DNA-templated transcription"/>
    <property type="evidence" value="ECO:0007669"/>
    <property type="project" value="UniProtKB-UniRule"/>
</dbReference>
<dbReference type="CDD" id="cd00653">
    <property type="entry name" value="RNA_pol_B_RPB2"/>
    <property type="match status" value="1"/>
</dbReference>
<dbReference type="FunFam" id="2.40.50.100:FF:000006">
    <property type="entry name" value="DNA-directed RNA polymerase subunit beta"/>
    <property type="match status" value="1"/>
</dbReference>
<dbReference type="FunFam" id="3.90.1800.10:FF:000001">
    <property type="entry name" value="DNA-directed RNA polymerase subunit beta"/>
    <property type="match status" value="1"/>
</dbReference>
<dbReference type="Gene3D" id="2.40.50.100">
    <property type="match status" value="1"/>
</dbReference>
<dbReference type="Gene3D" id="2.40.50.150">
    <property type="match status" value="1"/>
</dbReference>
<dbReference type="Gene3D" id="3.90.1100.10">
    <property type="match status" value="2"/>
</dbReference>
<dbReference type="Gene3D" id="2.30.150.10">
    <property type="entry name" value="DNA-directed RNA polymerase, beta subunit, external 1 domain"/>
    <property type="match status" value="1"/>
</dbReference>
<dbReference type="Gene3D" id="2.40.270.10">
    <property type="entry name" value="DNA-directed RNA polymerase, subunit 2, domain 6"/>
    <property type="match status" value="1"/>
</dbReference>
<dbReference type="Gene3D" id="3.90.1800.10">
    <property type="entry name" value="RNA polymerase alpha subunit dimerisation domain"/>
    <property type="match status" value="1"/>
</dbReference>
<dbReference type="Gene3D" id="3.90.1110.10">
    <property type="entry name" value="RNA polymerase Rpb2, domain 2"/>
    <property type="match status" value="1"/>
</dbReference>
<dbReference type="HAMAP" id="MF_01321">
    <property type="entry name" value="RNApol_bact_RpoB"/>
    <property type="match status" value="1"/>
</dbReference>
<dbReference type="InterPro" id="IPR042107">
    <property type="entry name" value="DNA-dir_RNA_pol_bsu_ext_1_sf"/>
</dbReference>
<dbReference type="InterPro" id="IPR019462">
    <property type="entry name" value="DNA-dir_RNA_pol_bsu_external_1"/>
</dbReference>
<dbReference type="InterPro" id="IPR015712">
    <property type="entry name" value="DNA-dir_RNA_pol_su2"/>
</dbReference>
<dbReference type="InterPro" id="IPR007120">
    <property type="entry name" value="DNA-dir_RNAP_su2_dom"/>
</dbReference>
<dbReference type="InterPro" id="IPR037033">
    <property type="entry name" value="DNA-dir_RNAP_su2_hyb_sf"/>
</dbReference>
<dbReference type="InterPro" id="IPR010243">
    <property type="entry name" value="RNA_pol_bsu_bac"/>
</dbReference>
<dbReference type="InterPro" id="IPR007121">
    <property type="entry name" value="RNA_pol_bsu_CS"/>
</dbReference>
<dbReference type="InterPro" id="IPR007644">
    <property type="entry name" value="RNA_pol_bsu_protrusion"/>
</dbReference>
<dbReference type="InterPro" id="IPR007642">
    <property type="entry name" value="RNA_pol_Rpb2_2"/>
</dbReference>
<dbReference type="InterPro" id="IPR037034">
    <property type="entry name" value="RNA_pol_Rpb2_2_sf"/>
</dbReference>
<dbReference type="InterPro" id="IPR007645">
    <property type="entry name" value="RNA_pol_Rpb2_3"/>
</dbReference>
<dbReference type="InterPro" id="IPR007641">
    <property type="entry name" value="RNA_pol_Rpb2_7"/>
</dbReference>
<dbReference type="InterPro" id="IPR014724">
    <property type="entry name" value="RNA_pol_RPB2_OB-fold"/>
</dbReference>
<dbReference type="NCBIfam" id="NF001616">
    <property type="entry name" value="PRK00405.1"/>
    <property type="match status" value="1"/>
</dbReference>
<dbReference type="NCBIfam" id="TIGR02013">
    <property type="entry name" value="rpoB"/>
    <property type="match status" value="1"/>
</dbReference>
<dbReference type="PANTHER" id="PTHR20856">
    <property type="entry name" value="DNA-DIRECTED RNA POLYMERASE I SUBUNIT 2"/>
    <property type="match status" value="1"/>
</dbReference>
<dbReference type="Pfam" id="PF04563">
    <property type="entry name" value="RNA_pol_Rpb2_1"/>
    <property type="match status" value="1"/>
</dbReference>
<dbReference type="Pfam" id="PF04561">
    <property type="entry name" value="RNA_pol_Rpb2_2"/>
    <property type="match status" value="1"/>
</dbReference>
<dbReference type="Pfam" id="PF04565">
    <property type="entry name" value="RNA_pol_Rpb2_3"/>
    <property type="match status" value="1"/>
</dbReference>
<dbReference type="Pfam" id="PF10385">
    <property type="entry name" value="RNA_pol_Rpb2_45"/>
    <property type="match status" value="1"/>
</dbReference>
<dbReference type="Pfam" id="PF00562">
    <property type="entry name" value="RNA_pol_Rpb2_6"/>
    <property type="match status" value="1"/>
</dbReference>
<dbReference type="Pfam" id="PF04560">
    <property type="entry name" value="RNA_pol_Rpb2_7"/>
    <property type="match status" value="1"/>
</dbReference>
<dbReference type="SUPFAM" id="SSF64484">
    <property type="entry name" value="beta and beta-prime subunits of DNA dependent RNA-polymerase"/>
    <property type="match status" value="1"/>
</dbReference>
<dbReference type="PROSITE" id="PS01166">
    <property type="entry name" value="RNA_POL_BETA"/>
    <property type="match status" value="1"/>
</dbReference>
<proteinExistence type="inferred from homology"/>
<reference key="1">
    <citation type="journal article" date="2011" name="Stand. Genomic Sci.">
        <title>Complete genome sequence of Rhodospirillum rubrum type strain (S1).</title>
        <authorList>
            <person name="Munk A.C."/>
            <person name="Copeland A."/>
            <person name="Lucas S."/>
            <person name="Lapidus A."/>
            <person name="Del Rio T.G."/>
            <person name="Barry K."/>
            <person name="Detter J.C."/>
            <person name="Hammon N."/>
            <person name="Israni S."/>
            <person name="Pitluck S."/>
            <person name="Brettin T."/>
            <person name="Bruce D."/>
            <person name="Han C."/>
            <person name="Tapia R."/>
            <person name="Gilna P."/>
            <person name="Schmutz J."/>
            <person name="Larimer F."/>
            <person name="Land M."/>
            <person name="Kyrpides N.C."/>
            <person name="Mavromatis K."/>
            <person name="Richardson P."/>
            <person name="Rohde M."/>
            <person name="Goeker M."/>
            <person name="Klenk H.P."/>
            <person name="Zhang Y."/>
            <person name="Roberts G.P."/>
            <person name="Reslewic S."/>
            <person name="Schwartz D.C."/>
        </authorList>
    </citation>
    <scope>NUCLEOTIDE SEQUENCE [LARGE SCALE GENOMIC DNA]</scope>
    <source>
        <strain>ATCC 11170 / ATH 1.1.1 / DSM 467 / LMG 4362 / NCIMB 8255 / S1</strain>
    </source>
</reference>
<keyword id="KW-0240">DNA-directed RNA polymerase</keyword>
<keyword id="KW-0548">Nucleotidyltransferase</keyword>
<keyword id="KW-1185">Reference proteome</keyword>
<keyword id="KW-0804">Transcription</keyword>
<keyword id="KW-0808">Transferase</keyword>
<name>RPOB_RHORT</name>
<accession>Q2RQV3</accession>
<comment type="function">
    <text evidence="1">DNA-dependent RNA polymerase catalyzes the transcription of DNA into RNA using the four ribonucleoside triphosphates as substrates.</text>
</comment>
<comment type="catalytic activity">
    <reaction evidence="1">
        <text>RNA(n) + a ribonucleoside 5'-triphosphate = RNA(n+1) + diphosphate</text>
        <dbReference type="Rhea" id="RHEA:21248"/>
        <dbReference type="Rhea" id="RHEA-COMP:14527"/>
        <dbReference type="Rhea" id="RHEA-COMP:17342"/>
        <dbReference type="ChEBI" id="CHEBI:33019"/>
        <dbReference type="ChEBI" id="CHEBI:61557"/>
        <dbReference type="ChEBI" id="CHEBI:140395"/>
        <dbReference type="EC" id="2.7.7.6"/>
    </reaction>
</comment>
<comment type="subunit">
    <text evidence="1">The RNAP catalytic core consists of 2 alpha, 1 beta, 1 beta' and 1 omega subunit. When a sigma factor is associated with the core the holoenzyme is formed, which can initiate transcription.</text>
</comment>
<comment type="similarity">
    <text evidence="1">Belongs to the RNA polymerase beta chain family.</text>
</comment>
<feature type="chain" id="PRO_0000237311" description="DNA-directed RNA polymerase subunit beta">
    <location>
        <begin position="1"/>
        <end position="1393"/>
    </location>
</feature>
<protein>
    <recommendedName>
        <fullName evidence="1">DNA-directed RNA polymerase subunit beta</fullName>
        <shortName evidence="1">RNAP subunit beta</shortName>
        <ecNumber evidence="1">2.7.7.6</ecNumber>
    </recommendedName>
    <alternativeName>
        <fullName evidence="1">RNA polymerase subunit beta</fullName>
    </alternativeName>
    <alternativeName>
        <fullName evidence="1">Transcriptase subunit beta</fullName>
    </alternativeName>
</protein>